<proteinExistence type="inferred from homology"/>
<sequence>MAITAQMVKELREKTGAGMMDCKKALTEMNGDMEKAIDFLREKGIAKAAKKADRIAAEGLTYIETKGNEALILELNSETDFVAKNEGFQALTKELAAHLLANKPATVEEALAQSYENGKTVEEHINEAIAKIGEKITLRRFEIVSKTDADAFGAYLHMGGRIGVVTVLEGTTDEEAAKDVAMHVAAVNPKYIDRDAVTAEEVEHERQVLTQQALNEGKPEKIVAKMVEGRLGKFFEEICLLDQAFVKNPDMKVRQFVESKGGTVKGFVRYAVGEGIEKREDNFAEEVMNQVKGNN</sequence>
<feature type="chain" id="PRO_1000074852" description="Elongation factor Ts">
    <location>
        <begin position="1"/>
        <end position="295"/>
    </location>
</feature>
<feature type="region of interest" description="Involved in Mg(2+) ion dislocation from EF-Tu" evidence="1">
    <location>
        <begin position="79"/>
        <end position="82"/>
    </location>
</feature>
<organism>
    <name type="scientific">Bacillus cytotoxicus (strain DSM 22905 / CIP 110041 / 391-98 / NVH 391-98)</name>
    <dbReference type="NCBI Taxonomy" id="315749"/>
    <lineage>
        <taxon>Bacteria</taxon>
        <taxon>Bacillati</taxon>
        <taxon>Bacillota</taxon>
        <taxon>Bacilli</taxon>
        <taxon>Bacillales</taxon>
        <taxon>Bacillaceae</taxon>
        <taxon>Bacillus</taxon>
        <taxon>Bacillus cereus group</taxon>
    </lineage>
</organism>
<reference key="1">
    <citation type="journal article" date="2008" name="Chem. Biol. Interact.">
        <title>Extending the Bacillus cereus group genomics to putative food-borne pathogens of different toxicity.</title>
        <authorList>
            <person name="Lapidus A."/>
            <person name="Goltsman E."/>
            <person name="Auger S."/>
            <person name="Galleron N."/>
            <person name="Segurens B."/>
            <person name="Dossat C."/>
            <person name="Land M.L."/>
            <person name="Broussolle V."/>
            <person name="Brillard J."/>
            <person name="Guinebretiere M.-H."/>
            <person name="Sanchis V."/>
            <person name="Nguen-the C."/>
            <person name="Lereclus D."/>
            <person name="Richardson P."/>
            <person name="Wincker P."/>
            <person name="Weissenbach J."/>
            <person name="Ehrlich S.D."/>
            <person name="Sorokin A."/>
        </authorList>
    </citation>
    <scope>NUCLEOTIDE SEQUENCE [LARGE SCALE GENOMIC DNA]</scope>
    <source>
        <strain>DSM 22905 / CIP 110041 / 391-98 / NVH 391-98</strain>
    </source>
</reference>
<gene>
    <name evidence="1" type="primary">tsf</name>
    <name type="ordered locus">Bcer98_2478</name>
</gene>
<dbReference type="EMBL" id="CP000764">
    <property type="protein sequence ID" value="ABS22714.1"/>
    <property type="molecule type" value="Genomic_DNA"/>
</dbReference>
<dbReference type="RefSeq" id="WP_012094918.1">
    <property type="nucleotide sequence ID" value="NC_009674.1"/>
</dbReference>
<dbReference type="SMR" id="A7GRF6"/>
<dbReference type="STRING" id="315749.Bcer98_2478"/>
<dbReference type="GeneID" id="33897733"/>
<dbReference type="KEGG" id="bcy:Bcer98_2478"/>
<dbReference type="eggNOG" id="COG0264">
    <property type="taxonomic scope" value="Bacteria"/>
</dbReference>
<dbReference type="HOGENOM" id="CLU_047155_0_2_9"/>
<dbReference type="OrthoDB" id="9808348at2"/>
<dbReference type="Proteomes" id="UP000002300">
    <property type="component" value="Chromosome"/>
</dbReference>
<dbReference type="GO" id="GO:0005737">
    <property type="term" value="C:cytoplasm"/>
    <property type="evidence" value="ECO:0007669"/>
    <property type="project" value="UniProtKB-SubCell"/>
</dbReference>
<dbReference type="GO" id="GO:0003746">
    <property type="term" value="F:translation elongation factor activity"/>
    <property type="evidence" value="ECO:0007669"/>
    <property type="project" value="UniProtKB-UniRule"/>
</dbReference>
<dbReference type="CDD" id="cd14275">
    <property type="entry name" value="UBA_EF-Ts"/>
    <property type="match status" value="1"/>
</dbReference>
<dbReference type="FunFam" id="1.10.286.20:FF:000003">
    <property type="entry name" value="Elongation factor Ts"/>
    <property type="match status" value="1"/>
</dbReference>
<dbReference type="FunFam" id="1.10.8.10:FF:000001">
    <property type="entry name" value="Elongation factor Ts"/>
    <property type="match status" value="1"/>
</dbReference>
<dbReference type="FunFam" id="3.30.479.20:FF:000005">
    <property type="entry name" value="Elongation factor Ts"/>
    <property type="match status" value="1"/>
</dbReference>
<dbReference type="Gene3D" id="1.10.286.20">
    <property type="match status" value="1"/>
</dbReference>
<dbReference type="Gene3D" id="1.10.8.10">
    <property type="entry name" value="DNA helicase RuvA subunit, C-terminal domain"/>
    <property type="match status" value="1"/>
</dbReference>
<dbReference type="Gene3D" id="3.30.479.20">
    <property type="entry name" value="Elongation factor Ts, dimerisation domain"/>
    <property type="match status" value="2"/>
</dbReference>
<dbReference type="HAMAP" id="MF_00050">
    <property type="entry name" value="EF_Ts"/>
    <property type="match status" value="1"/>
</dbReference>
<dbReference type="InterPro" id="IPR036402">
    <property type="entry name" value="EF-Ts_dimer_sf"/>
</dbReference>
<dbReference type="InterPro" id="IPR001816">
    <property type="entry name" value="Transl_elong_EFTs/EF1B"/>
</dbReference>
<dbReference type="InterPro" id="IPR014039">
    <property type="entry name" value="Transl_elong_EFTs/EF1B_dimer"/>
</dbReference>
<dbReference type="InterPro" id="IPR018101">
    <property type="entry name" value="Transl_elong_Ts_CS"/>
</dbReference>
<dbReference type="InterPro" id="IPR009060">
    <property type="entry name" value="UBA-like_sf"/>
</dbReference>
<dbReference type="NCBIfam" id="TIGR00116">
    <property type="entry name" value="tsf"/>
    <property type="match status" value="1"/>
</dbReference>
<dbReference type="PANTHER" id="PTHR11741">
    <property type="entry name" value="ELONGATION FACTOR TS"/>
    <property type="match status" value="1"/>
</dbReference>
<dbReference type="PANTHER" id="PTHR11741:SF0">
    <property type="entry name" value="ELONGATION FACTOR TS, MITOCHONDRIAL"/>
    <property type="match status" value="1"/>
</dbReference>
<dbReference type="Pfam" id="PF00889">
    <property type="entry name" value="EF_TS"/>
    <property type="match status" value="1"/>
</dbReference>
<dbReference type="SUPFAM" id="SSF54713">
    <property type="entry name" value="Elongation factor Ts (EF-Ts), dimerisation domain"/>
    <property type="match status" value="2"/>
</dbReference>
<dbReference type="SUPFAM" id="SSF46934">
    <property type="entry name" value="UBA-like"/>
    <property type="match status" value="1"/>
</dbReference>
<dbReference type="PROSITE" id="PS01126">
    <property type="entry name" value="EF_TS_1"/>
    <property type="match status" value="1"/>
</dbReference>
<dbReference type="PROSITE" id="PS01127">
    <property type="entry name" value="EF_TS_2"/>
    <property type="match status" value="1"/>
</dbReference>
<evidence type="ECO:0000255" key="1">
    <source>
        <dbReference type="HAMAP-Rule" id="MF_00050"/>
    </source>
</evidence>
<name>EFTS_BACCN</name>
<accession>A7GRF6</accession>
<comment type="function">
    <text evidence="1">Associates with the EF-Tu.GDP complex and induces the exchange of GDP to GTP. It remains bound to the aminoacyl-tRNA.EF-Tu.GTP complex up to the GTP hydrolysis stage on the ribosome.</text>
</comment>
<comment type="subcellular location">
    <subcellularLocation>
        <location evidence="1">Cytoplasm</location>
    </subcellularLocation>
</comment>
<comment type="similarity">
    <text evidence="1">Belongs to the EF-Ts family.</text>
</comment>
<keyword id="KW-0963">Cytoplasm</keyword>
<keyword id="KW-0251">Elongation factor</keyword>
<keyword id="KW-0648">Protein biosynthesis</keyword>
<protein>
    <recommendedName>
        <fullName evidence="1">Elongation factor Ts</fullName>
        <shortName evidence="1">EF-Ts</shortName>
    </recommendedName>
</protein>